<sequence>MQKSYGVALESPTGSGKTIMALKSALQYSSERKLKVLYLVRTNSQEEQVIKELRSLSSTMKIRAIPMQGRVNMCILYRMVDDLHEINAESLAKFCNMKKREVMAGNEAACPYFNFKIRSDETKRFLFDELPTAEEFYDYGERNNVCPYESMKAALPDADIVIAPYAYFLNRSVAEKFLSHWGVSRNQIVIILDEAHNLPDIGRSIGSFRISVESLNRADREAQAYGDPELSQKIHVSDLIEMIRSALQSMVSERCGKGDVRIRFQEFMEYMRIMNKRSEREIRSLLNYLYLFGEYVENEKEKVGKVPFSYCSSVASRIIAFSDQDEEKYAAILSPEDGGYMQAACLDPSGILEVLKESKTIHMSGTLDPFDFYSDITGFEIPFKKIGEIFPPENRYIAYYDGVSSKYDTLDEKELDRMATVIEDIILKVKKNTIVYFPSYSLMDRVENRVSFEHMKEYRGIDQKELYSMLKKFRRDHGTIFAVSGGRLSEGINFPGNELEMIILAGLPFPRPDAINRSLFDYYERKYGKGWEYSVVYPTAIKIRQEIGRLIRSAEDTGACVILDKRAGQFRKFIPDMKKTSDPASDIYNFFISAQAREKYGA</sequence>
<proteinExistence type="evidence at protein level"/>
<keyword id="KW-0002">3D-structure</keyword>
<keyword id="KW-0004">4Fe-4S</keyword>
<keyword id="KW-0067">ATP-binding</keyword>
<keyword id="KW-0227">DNA damage</keyword>
<keyword id="KW-0234">DNA repair</keyword>
<keyword id="KW-0238">DNA-binding</keyword>
<keyword id="KW-0347">Helicase</keyword>
<keyword id="KW-0378">Hydrolase</keyword>
<keyword id="KW-0408">Iron</keyword>
<keyword id="KW-0411">Iron-sulfur</keyword>
<keyword id="KW-0413">Isomerase</keyword>
<keyword id="KW-0479">Metal-binding</keyword>
<keyword id="KW-0547">Nucleotide-binding</keyword>
<keyword id="KW-1185">Reference proteome</keyword>
<keyword id="KW-0804">Transcription</keyword>
<keyword id="KW-0805">Transcription regulation</keyword>
<reference key="1">
    <citation type="journal article" date="2000" name="Nature">
        <title>The genome sequence of the thermoacidophilic scavenger Thermoplasma acidophilum.</title>
        <authorList>
            <person name="Ruepp A."/>
            <person name="Graml W."/>
            <person name="Santos-Martinez M.-L."/>
            <person name="Koretke K.K."/>
            <person name="Volker C."/>
            <person name="Mewes H.-W."/>
            <person name="Frishman D."/>
            <person name="Stocker S."/>
            <person name="Lupas A.N."/>
            <person name="Baumeister W."/>
        </authorList>
    </citation>
    <scope>NUCLEOTIDE SEQUENCE [LARGE SCALE GENOMIC DNA]</scope>
    <source>
        <strain>ATCC 25905 / DSM 1728 / JCM 9062 / NBRC 15155 / AMRC-C165</strain>
    </source>
</reference>
<reference evidence="8" key="2">
    <citation type="journal article" date="2008" name="PLoS Biol.">
        <title>Crystal structure of the FeS cluster-containing nucleotide excision repair helicase XPD.</title>
        <authorList>
            <person name="Wolski S.C."/>
            <person name="Kuper J."/>
            <person name="Hanzelmann P."/>
            <person name="Truglio J.J."/>
            <person name="Croteau D.L."/>
            <person name="Van Houten B."/>
            <person name="Kisker C."/>
        </authorList>
    </citation>
    <scope>X-RAY CRYSTALLOGRAPHY (2.9 ANGSTROMS) OF 5-597 IN COMPLEX WITH [4FE-4S] CLUSTER</scope>
    <scope>FUNCTION AS A 5'-3' HELICASE</scope>
    <scope>CATALYTIC ACTIVITY</scope>
    <scope>COFACTOR</scope>
    <scope>SUBUNIT</scope>
</reference>
<reference evidence="9" key="3">
    <citation type="journal article" date="2012" name="EMBO J.">
        <title>Functional and structural studies of the nucleotide excision repair helicase XPD suggest a polarity for DNA translocation.</title>
        <authorList>
            <person name="Kuper J."/>
            <person name="Wolski S.C."/>
            <person name="Michels G."/>
            <person name="Kisker C."/>
        </authorList>
    </citation>
    <scope>X-RAY CRYSTALLOGRAPHY (2.20 ANGSTROMS) OF 2-597 IN COMPLEX WITH SSDNA AND [4FE-4S] CLUSTER</scope>
    <scope>FUNCTION AS A 5'-3' HELICASE</scope>
    <scope>FUNCTION AS AN ATPASE</scope>
    <scope>CATALYTIC ACTIVITY</scope>
    <scope>COFACTOR</scope>
    <scope>SUBUNIT</scope>
    <scope>DNA-BINDING</scope>
    <scope>MUTAGENESIS OF PHE-115; TYR-148; LYS-152; PHE-308; TYR-407; TRP-531; ASP-564 AND ARG-566</scope>
</reference>
<reference evidence="10" key="4">
    <citation type="journal article" date="2016" name="Nucleic Acids Res.">
        <title>Mechanism of DNA loading by the DNA repair helicase XPD.</title>
        <authorList>
            <person name="Constantinescu-Aruxandei D."/>
            <person name="Petrovic-Stojanovska B."/>
            <person name="Penedo J.C."/>
            <person name="White M.F."/>
            <person name="Naismith J.H."/>
        </authorList>
    </citation>
    <scope>X-RAY CRYSTALLOGRAPHY (2.20 ANGSTROMS) OF 1-597 IN COMPLEX WITH [4FE-4S] CLUSTER AND LINKED TO SSDNA</scope>
    <scope>COFACTOR</scope>
    <scope>SUBUNIT</scope>
</reference>
<feature type="chain" id="PRO_0000352310" description="ATP-dependent DNA helicase XPD">
    <location>
        <begin position="1"/>
        <end position="602"/>
    </location>
</feature>
<feature type="domain" description="Helicase ATP-binding" evidence="1">
    <location>
        <begin position="1"/>
        <end position="247"/>
    </location>
</feature>
<feature type="domain" description="Helicase C-terminal" evidence="2">
    <location>
        <begin position="421"/>
        <end position="602"/>
    </location>
</feature>
<feature type="short sequence motif" description="DEAH box">
    <location>
        <begin position="193"/>
        <end position="196"/>
    </location>
</feature>
<feature type="binding site" evidence="1">
    <location>
        <begin position="11"/>
        <end position="18"/>
    </location>
    <ligand>
        <name>ATP</name>
        <dbReference type="ChEBI" id="CHEBI:30616"/>
    </ligand>
</feature>
<feature type="binding site" evidence="3 4 8 9 10">
    <location>
        <position position="74"/>
    </location>
    <ligand>
        <name>[4Fe-4S] cluster</name>
        <dbReference type="ChEBI" id="CHEBI:49883"/>
    </ligand>
</feature>
<feature type="binding site" evidence="3 4 8 9 10">
    <location>
        <position position="95"/>
    </location>
    <ligand>
        <name>[4Fe-4S] cluster</name>
        <dbReference type="ChEBI" id="CHEBI:49883"/>
    </ligand>
</feature>
<feature type="binding site" evidence="3 4 8 9 10">
    <location>
        <position position="110"/>
    </location>
    <ligand>
        <name>[4Fe-4S] cluster</name>
        <dbReference type="ChEBI" id="CHEBI:49883"/>
    </ligand>
</feature>
<feature type="binding site" evidence="3 4 8 9 10">
    <location>
        <position position="146"/>
    </location>
    <ligand>
        <name>[4Fe-4S] cluster</name>
        <dbReference type="ChEBI" id="CHEBI:49883"/>
    </ligand>
</feature>
<feature type="binding site" evidence="4 9">
    <location>
        <position position="531"/>
    </location>
    <ligand>
        <name>ssDNA</name>
        <dbReference type="ChEBI" id="CHEBI:9160"/>
    </ligand>
</feature>
<feature type="binding site" evidence="4 5 9 10">
    <location>
        <position position="566"/>
    </location>
    <ligand>
        <name>ssDNA</name>
        <dbReference type="ChEBI" id="CHEBI:9160"/>
    </ligand>
</feature>
<feature type="mutagenesis site" description="5-fold decreased ssDNA-binding, wild-type ATPase, 3-fold increased helicase activity." evidence="4">
    <original>F</original>
    <variation>A</variation>
    <location>
        <position position="115"/>
    </location>
</feature>
<feature type="mutagenesis site" description="20-fold decreased ssDNA-binding, 2-fold increased ATPase, 10-fold decreased helicase activity." evidence="4">
    <original>Y</original>
    <variation>A</variation>
    <location>
        <position position="148"/>
    </location>
</feature>
<feature type="mutagenesis site" description="350-fold decreased ssDNA-binding, 2-fold increased ATPase, 3-fold increased helicase activity." evidence="4">
    <original>K</original>
    <variation>A</variation>
    <location>
        <position position="152"/>
    </location>
</feature>
<feature type="mutagenesis site" description="10-fold decreased ssDNA-binding, 2-fold increased ATPase, 20-fold decreased helicase activity." evidence="4">
    <original>F</original>
    <variation>A</variation>
    <location>
        <position position="308"/>
    </location>
</feature>
<feature type="mutagenesis site" description="55-fold decreased ssDNA-binding, 10-fold decreased ATPase, 3-fold increased helicase activity." evidence="4">
    <original>Y</original>
    <variation>E</variation>
    <location>
        <position position="407"/>
    </location>
</feature>
<feature type="mutagenesis site" description="500-fold decreased ssDNA-binding, no measurable ATPase, 3-fold reduced helicase activity." evidence="4">
    <original>W</original>
    <variation>S</variation>
    <location>
        <position position="531"/>
    </location>
</feature>
<feature type="mutagenesis site" description="10-fold decreased ssDNA-binding, 15-fold decreased ATPase, no helicase activity." evidence="4">
    <original>D</original>
    <variation>N</variation>
    <location>
        <position position="564"/>
    </location>
</feature>
<feature type="mutagenesis site" description="35-fold decreased ssDNA-binding, 28-fold decreased ATPase, 10-fold decreased helicase activity." evidence="4">
    <original>R</original>
    <variation>E</variation>
    <location>
        <position position="566"/>
    </location>
</feature>
<feature type="strand" evidence="12">
    <location>
        <begin position="4"/>
        <end position="10"/>
    </location>
</feature>
<feature type="strand" evidence="11">
    <location>
        <begin position="13"/>
        <end position="16"/>
    </location>
</feature>
<feature type="helix" evidence="12">
    <location>
        <begin position="17"/>
        <end position="32"/>
    </location>
</feature>
<feature type="strand" evidence="12">
    <location>
        <begin position="35"/>
        <end position="42"/>
    </location>
</feature>
<feature type="helix" evidence="12">
    <location>
        <begin position="43"/>
        <end position="59"/>
    </location>
</feature>
<feature type="strand" evidence="12">
    <location>
        <begin position="64"/>
        <end position="66"/>
    </location>
</feature>
<feature type="helix" evidence="12">
    <location>
        <begin position="70"/>
        <end position="73"/>
    </location>
</feature>
<feature type="helix" evidence="12">
    <location>
        <begin position="77"/>
        <end position="80"/>
    </location>
</feature>
<feature type="helix" evidence="12">
    <location>
        <begin position="88"/>
        <end position="103"/>
    </location>
</feature>
<feature type="helix" evidence="11">
    <location>
        <begin position="107"/>
        <end position="109"/>
    </location>
</feature>
<feature type="helix" evidence="12">
    <location>
        <begin position="115"/>
        <end position="118"/>
    </location>
</feature>
<feature type="helix" evidence="12">
    <location>
        <begin position="120"/>
        <end position="129"/>
    </location>
</feature>
<feature type="helix" evidence="12">
    <location>
        <begin position="133"/>
        <end position="142"/>
    </location>
</feature>
<feature type="helix" evidence="12">
    <location>
        <begin position="147"/>
        <end position="154"/>
    </location>
</feature>
<feature type="helix" evidence="12">
    <location>
        <begin position="155"/>
        <end position="157"/>
    </location>
</feature>
<feature type="strand" evidence="12">
    <location>
        <begin position="159"/>
        <end position="164"/>
    </location>
</feature>
<feature type="helix" evidence="12">
    <location>
        <begin position="165"/>
        <end position="168"/>
    </location>
</feature>
<feature type="helix" evidence="12">
    <location>
        <begin position="171"/>
        <end position="181"/>
    </location>
</feature>
<feature type="helix" evidence="12">
    <location>
        <begin position="185"/>
        <end position="187"/>
    </location>
</feature>
<feature type="strand" evidence="12">
    <location>
        <begin position="188"/>
        <end position="192"/>
    </location>
</feature>
<feature type="helix" evidence="12">
    <location>
        <begin position="195"/>
        <end position="197"/>
    </location>
</feature>
<feature type="helix" evidence="12">
    <location>
        <begin position="198"/>
        <end position="206"/>
    </location>
</feature>
<feature type="strand" evidence="12">
    <location>
        <begin position="208"/>
        <end position="211"/>
    </location>
</feature>
<feature type="helix" evidence="12">
    <location>
        <begin position="212"/>
        <end position="224"/>
    </location>
</feature>
<feature type="strand" evidence="12">
    <location>
        <begin position="229"/>
        <end position="231"/>
    </location>
</feature>
<feature type="helix" evidence="12">
    <location>
        <begin position="236"/>
        <end position="254"/>
    </location>
</feature>
<feature type="strand" evidence="12">
    <location>
        <begin position="256"/>
        <end position="258"/>
    </location>
</feature>
<feature type="strand" evidence="12">
    <location>
        <begin position="260"/>
        <end position="262"/>
    </location>
</feature>
<feature type="helix" evidence="12">
    <location>
        <begin position="265"/>
        <end position="275"/>
    </location>
</feature>
<feature type="helix" evidence="12">
    <location>
        <begin position="279"/>
        <end position="302"/>
    </location>
</feature>
<feature type="helix" evidence="12">
    <location>
        <begin position="310"/>
        <end position="322"/>
    </location>
</feature>
<feature type="turn" evidence="12">
    <location>
        <begin position="326"/>
        <end position="328"/>
    </location>
</feature>
<feature type="strand" evidence="12">
    <location>
        <begin position="329"/>
        <end position="334"/>
    </location>
</feature>
<feature type="helix" evidence="12">
    <location>
        <begin position="336"/>
        <end position="338"/>
    </location>
</feature>
<feature type="strand" evidence="12">
    <location>
        <begin position="340"/>
        <end position="345"/>
    </location>
</feature>
<feature type="helix" evidence="12">
    <location>
        <begin position="349"/>
        <end position="352"/>
    </location>
</feature>
<feature type="helix" evidence="12">
    <location>
        <begin position="353"/>
        <end position="357"/>
    </location>
</feature>
<feature type="strand" evidence="12">
    <location>
        <begin position="358"/>
        <end position="366"/>
    </location>
</feature>
<feature type="helix" evidence="12">
    <location>
        <begin position="370"/>
        <end position="377"/>
    </location>
</feature>
<feature type="strand" evidence="12">
    <location>
        <begin position="383"/>
        <end position="385"/>
    </location>
</feature>
<feature type="helix" evidence="12">
    <location>
        <begin position="392"/>
        <end position="394"/>
    </location>
</feature>
<feature type="strand" evidence="12">
    <location>
        <begin position="395"/>
        <end position="400"/>
    </location>
</feature>
<feature type="helix" evidence="13">
    <location>
        <begin position="407"/>
        <end position="409"/>
    </location>
</feature>
<feature type="helix" evidence="12">
    <location>
        <begin position="412"/>
        <end position="429"/>
    </location>
</feature>
<feature type="strand" evidence="12">
    <location>
        <begin position="433"/>
        <end position="438"/>
    </location>
</feature>
<feature type="helix" evidence="12">
    <location>
        <begin position="440"/>
        <end position="446"/>
    </location>
</feature>
<feature type="helix" evidence="12">
    <location>
        <begin position="464"/>
        <end position="473"/>
    </location>
</feature>
<feature type="strand" evidence="12">
    <location>
        <begin position="479"/>
        <end position="483"/>
    </location>
</feature>
<feature type="strand" evidence="13">
    <location>
        <begin position="489"/>
        <end position="491"/>
    </location>
</feature>
<feature type="helix" evidence="13">
    <location>
        <begin position="496"/>
        <end position="498"/>
    </location>
</feature>
<feature type="strand" evidence="12">
    <location>
        <begin position="501"/>
        <end position="506"/>
    </location>
</feature>
<feature type="helix" evidence="12">
    <location>
        <begin position="514"/>
        <end position="527"/>
    </location>
</feature>
<feature type="helix" evidence="12">
    <location>
        <begin position="530"/>
        <end position="534"/>
    </location>
</feature>
<feature type="helix" evidence="12">
    <location>
        <begin position="536"/>
        <end position="548"/>
    </location>
</feature>
<feature type="strand" evidence="11">
    <location>
        <begin position="553"/>
        <end position="555"/>
    </location>
</feature>
<feature type="strand" evidence="12">
    <location>
        <begin position="558"/>
        <end position="563"/>
    </location>
</feature>
<feature type="helix" evidence="12">
    <location>
        <begin position="565"/>
        <end position="573"/>
    </location>
</feature>
<feature type="strand" evidence="12">
    <location>
        <begin position="578"/>
        <end position="581"/>
    </location>
</feature>
<feature type="helix" evidence="12">
    <location>
        <begin position="583"/>
        <end position="595"/>
    </location>
</feature>
<accession>Q9HM14</accession>
<gene>
    <name type="ordered locus">Ta0057</name>
</gene>
<name>XPD_THEAC</name>
<protein>
    <recommendedName>
        <fullName evidence="6">ATP-dependent DNA helicase XPD</fullName>
        <ecNumber evidence="3 4">5.6.2.3</ecNumber>
    </recommendedName>
    <alternativeName>
        <fullName evidence="7">DNA 5'-3' helicase XPD</fullName>
    </alternativeName>
</protein>
<evidence type="ECO:0000255" key="1">
    <source>
        <dbReference type="PROSITE-ProRule" id="PRU00541"/>
    </source>
</evidence>
<evidence type="ECO:0000255" key="2">
    <source>
        <dbReference type="PROSITE-ProRule" id="PRU00542"/>
    </source>
</evidence>
<evidence type="ECO:0000269" key="3">
    <source>
    </source>
</evidence>
<evidence type="ECO:0000269" key="4">
    <source>
    </source>
</evidence>
<evidence type="ECO:0000269" key="5">
    <source>
    </source>
</evidence>
<evidence type="ECO:0000303" key="6">
    <source>
    </source>
</evidence>
<evidence type="ECO:0000305" key="7"/>
<evidence type="ECO:0007744" key="8">
    <source>
        <dbReference type="PDB" id="2VSF"/>
    </source>
</evidence>
<evidence type="ECO:0007744" key="9">
    <source>
        <dbReference type="PDB" id="4A15"/>
    </source>
</evidence>
<evidence type="ECO:0007744" key="10">
    <source>
        <dbReference type="PDB" id="5H8W"/>
    </source>
</evidence>
<evidence type="ECO:0007829" key="11">
    <source>
        <dbReference type="PDB" id="2VSF"/>
    </source>
</evidence>
<evidence type="ECO:0007829" key="12">
    <source>
        <dbReference type="PDB" id="4A15"/>
    </source>
</evidence>
<evidence type="ECO:0007829" key="13">
    <source>
        <dbReference type="PDB" id="5H8W"/>
    </source>
</evidence>
<comment type="function">
    <text evidence="3 4">ATP-dependent 5'-3' DNA helicase (PubMed:18578568, PubMed:22081108). Thought to be involved in nucleotide excision repair (NER) of DNA (Probable).</text>
</comment>
<comment type="catalytic activity">
    <reaction evidence="3 4">
        <text>Couples ATP hydrolysis with the unwinding of duplex DNA at the replication fork by translocating in the 5'-3' direction. This creates two antiparallel DNA single strands (ssDNA). The leading ssDNA polymer is the template for DNA polymerase III holoenzyme which synthesizes a continuous strand.</text>
        <dbReference type="EC" id="5.6.2.3"/>
    </reaction>
</comment>
<comment type="catalytic activity">
    <reaction evidence="4">
        <text>ATP + H2O = ADP + phosphate + H(+)</text>
        <dbReference type="Rhea" id="RHEA:13065"/>
        <dbReference type="ChEBI" id="CHEBI:15377"/>
        <dbReference type="ChEBI" id="CHEBI:15378"/>
        <dbReference type="ChEBI" id="CHEBI:30616"/>
        <dbReference type="ChEBI" id="CHEBI:43474"/>
        <dbReference type="ChEBI" id="CHEBI:456216"/>
        <dbReference type="EC" id="5.6.2.3"/>
    </reaction>
</comment>
<comment type="cofactor">
    <cofactor evidence="3 4 5">
        <name>[4Fe-4S] cluster</name>
        <dbReference type="ChEBI" id="CHEBI:49883"/>
    </cofactor>
    <text evidence="3 4 5">Binds 1 [4Fe-4S] cluster.</text>
</comment>
<comment type="subunit">
    <text evidence="3 4 5">Monomer (PubMed:18578568, PubMed:22081108, PubMed:26896802).</text>
</comment>
<comment type="similarity">
    <text evidence="7">Belongs to the helicase family. RAD3/XPD subfamily.</text>
</comment>
<organism>
    <name type="scientific">Thermoplasma acidophilum (strain ATCC 25905 / DSM 1728 / JCM 9062 / NBRC 15155 / AMRC-C165)</name>
    <dbReference type="NCBI Taxonomy" id="273075"/>
    <lineage>
        <taxon>Archaea</taxon>
        <taxon>Methanobacteriati</taxon>
        <taxon>Thermoplasmatota</taxon>
        <taxon>Thermoplasmata</taxon>
        <taxon>Thermoplasmatales</taxon>
        <taxon>Thermoplasmataceae</taxon>
        <taxon>Thermoplasma</taxon>
    </lineage>
</organism>
<dbReference type="EC" id="5.6.2.3" evidence="3 4"/>
<dbReference type="EMBL" id="AL445063">
    <property type="protein sequence ID" value="CAC11205.1"/>
    <property type="molecule type" value="Genomic_DNA"/>
</dbReference>
<dbReference type="PDB" id="2VSF">
    <property type="method" value="X-ray"/>
    <property type="resolution" value="2.90 A"/>
    <property type="chains" value="A=5-597"/>
</dbReference>
<dbReference type="PDB" id="4A15">
    <property type="method" value="X-ray"/>
    <property type="resolution" value="2.20 A"/>
    <property type="chains" value="A=2-597"/>
</dbReference>
<dbReference type="PDB" id="5H8W">
    <property type="method" value="X-ray"/>
    <property type="resolution" value="2.20 A"/>
    <property type="chains" value="A=1-597"/>
</dbReference>
<dbReference type="PDBsum" id="2VSF"/>
<dbReference type="PDBsum" id="4A15"/>
<dbReference type="PDBsum" id="5H8W"/>
<dbReference type="SMR" id="Q9HM14"/>
<dbReference type="FunCoup" id="Q9HM14">
    <property type="interactions" value="99"/>
</dbReference>
<dbReference type="STRING" id="273075.gene:9571272"/>
<dbReference type="PaxDb" id="273075-Ta0057m"/>
<dbReference type="EnsemblBacteria" id="CAC11205">
    <property type="protein sequence ID" value="CAC11205"/>
    <property type="gene ID" value="CAC11205"/>
</dbReference>
<dbReference type="KEGG" id="tac:Ta0057"/>
<dbReference type="eggNOG" id="arCOG00770">
    <property type="taxonomic scope" value="Archaea"/>
</dbReference>
<dbReference type="HOGENOM" id="CLU_006515_9_0_2"/>
<dbReference type="InParanoid" id="Q9HM14"/>
<dbReference type="BRENDA" id="3.6.4.12">
    <property type="organism ID" value="6324"/>
</dbReference>
<dbReference type="EvolutionaryTrace" id="Q9HM14"/>
<dbReference type="Proteomes" id="UP000001024">
    <property type="component" value="Chromosome"/>
</dbReference>
<dbReference type="GO" id="GO:0051539">
    <property type="term" value="F:4 iron, 4 sulfur cluster binding"/>
    <property type="evidence" value="ECO:0007669"/>
    <property type="project" value="UniProtKB-KW"/>
</dbReference>
<dbReference type="GO" id="GO:0005524">
    <property type="term" value="F:ATP binding"/>
    <property type="evidence" value="ECO:0007669"/>
    <property type="project" value="UniProtKB-KW"/>
</dbReference>
<dbReference type="GO" id="GO:0016887">
    <property type="term" value="F:ATP hydrolysis activity"/>
    <property type="evidence" value="ECO:0007669"/>
    <property type="project" value="RHEA"/>
</dbReference>
<dbReference type="GO" id="GO:0003677">
    <property type="term" value="F:DNA binding"/>
    <property type="evidence" value="ECO:0007669"/>
    <property type="project" value="UniProtKB-KW"/>
</dbReference>
<dbReference type="GO" id="GO:0003678">
    <property type="term" value="F:DNA helicase activity"/>
    <property type="evidence" value="ECO:0007669"/>
    <property type="project" value="InterPro"/>
</dbReference>
<dbReference type="GO" id="GO:0046872">
    <property type="term" value="F:metal ion binding"/>
    <property type="evidence" value="ECO:0007669"/>
    <property type="project" value="UniProtKB-KW"/>
</dbReference>
<dbReference type="GO" id="GO:0006281">
    <property type="term" value="P:DNA repair"/>
    <property type="evidence" value="ECO:0007669"/>
    <property type="project" value="UniProtKB-KW"/>
</dbReference>
<dbReference type="CDD" id="cd18788">
    <property type="entry name" value="SF2_C_XPD"/>
    <property type="match status" value="1"/>
</dbReference>
<dbReference type="Gene3D" id="1.10.275.40">
    <property type="match status" value="1"/>
</dbReference>
<dbReference type="Gene3D" id="1.10.30.20">
    <property type="entry name" value="Bacterial XPD DNA helicase, FeS cluster domain"/>
    <property type="match status" value="1"/>
</dbReference>
<dbReference type="Gene3D" id="3.40.50.300">
    <property type="entry name" value="P-loop containing nucleotide triphosphate hydrolases"/>
    <property type="match status" value="2"/>
</dbReference>
<dbReference type="InterPro" id="IPR006555">
    <property type="entry name" value="ATP-dep_Helicase_C"/>
</dbReference>
<dbReference type="InterPro" id="IPR045028">
    <property type="entry name" value="DinG/Rad3-like"/>
</dbReference>
<dbReference type="InterPro" id="IPR010643">
    <property type="entry name" value="HBB"/>
</dbReference>
<dbReference type="InterPro" id="IPR014013">
    <property type="entry name" value="Helic_SF1/SF2_ATP-bd_DinG/Rad3"/>
</dbReference>
<dbReference type="InterPro" id="IPR006554">
    <property type="entry name" value="Helicase-like_DEXD_c2"/>
</dbReference>
<dbReference type="InterPro" id="IPR027417">
    <property type="entry name" value="P-loop_NTPase"/>
</dbReference>
<dbReference type="InterPro" id="IPR010614">
    <property type="entry name" value="RAD3-like_helicase_DEAD"/>
</dbReference>
<dbReference type="InterPro" id="IPR042493">
    <property type="entry name" value="XPD_DNA_FeS"/>
</dbReference>
<dbReference type="PANTHER" id="PTHR11472">
    <property type="entry name" value="DNA REPAIR DEAD HELICASE RAD3/XP-D SUBFAMILY MEMBER"/>
    <property type="match status" value="1"/>
</dbReference>
<dbReference type="PANTHER" id="PTHR11472:SF34">
    <property type="entry name" value="REGULATOR OF TELOMERE ELONGATION HELICASE 1"/>
    <property type="match status" value="1"/>
</dbReference>
<dbReference type="Pfam" id="PF06733">
    <property type="entry name" value="DEAD_2"/>
    <property type="match status" value="1"/>
</dbReference>
<dbReference type="Pfam" id="PF06777">
    <property type="entry name" value="HBB"/>
    <property type="match status" value="1"/>
</dbReference>
<dbReference type="Pfam" id="PF13307">
    <property type="entry name" value="Helicase_C_2"/>
    <property type="match status" value="1"/>
</dbReference>
<dbReference type="SMART" id="SM00488">
    <property type="entry name" value="DEXDc2"/>
    <property type="match status" value="1"/>
</dbReference>
<dbReference type="SMART" id="SM00491">
    <property type="entry name" value="HELICc2"/>
    <property type="match status" value="1"/>
</dbReference>
<dbReference type="SUPFAM" id="SSF52540">
    <property type="entry name" value="P-loop containing nucleoside triphosphate hydrolases"/>
    <property type="match status" value="1"/>
</dbReference>
<dbReference type="PROSITE" id="PS51193">
    <property type="entry name" value="HELICASE_ATP_BIND_2"/>
    <property type="match status" value="1"/>
</dbReference>
<dbReference type="PROSITE" id="PS51194">
    <property type="entry name" value="HELICASE_CTER"/>
    <property type="match status" value="1"/>
</dbReference>